<reference key="1">
    <citation type="submission" date="2007-06" db="EMBL/GenBank/DDBJ databases">
        <title>Complete sequence of Sinorhizobium medicae WSM419 chromosome.</title>
        <authorList>
            <consortium name="US DOE Joint Genome Institute"/>
            <person name="Copeland A."/>
            <person name="Lucas S."/>
            <person name="Lapidus A."/>
            <person name="Barry K."/>
            <person name="Glavina del Rio T."/>
            <person name="Dalin E."/>
            <person name="Tice H."/>
            <person name="Pitluck S."/>
            <person name="Chain P."/>
            <person name="Malfatti S."/>
            <person name="Shin M."/>
            <person name="Vergez L."/>
            <person name="Schmutz J."/>
            <person name="Larimer F."/>
            <person name="Land M."/>
            <person name="Hauser L."/>
            <person name="Kyrpides N."/>
            <person name="Mikhailova N."/>
            <person name="Reeve W.G."/>
            <person name="Richardson P."/>
        </authorList>
    </citation>
    <scope>NUCLEOTIDE SEQUENCE [LARGE SCALE GENOMIC DNA]</scope>
    <source>
        <strain>WSM419</strain>
    </source>
</reference>
<dbReference type="EC" id="2.1.2.11" evidence="1"/>
<dbReference type="EMBL" id="CP000738">
    <property type="protein sequence ID" value="ABR60892.1"/>
    <property type="molecule type" value="Genomic_DNA"/>
</dbReference>
<dbReference type="RefSeq" id="WP_011976189.1">
    <property type="nucleotide sequence ID" value="NC_009636.1"/>
</dbReference>
<dbReference type="RefSeq" id="YP_001327727.1">
    <property type="nucleotide sequence ID" value="NC_009636.1"/>
</dbReference>
<dbReference type="SMR" id="A6UB62"/>
<dbReference type="STRING" id="366394.Smed_2059"/>
<dbReference type="GeneID" id="61612968"/>
<dbReference type="KEGG" id="smd:Smed_2059"/>
<dbReference type="PATRIC" id="fig|366394.8.peg.5215"/>
<dbReference type="eggNOG" id="COG0413">
    <property type="taxonomic scope" value="Bacteria"/>
</dbReference>
<dbReference type="HOGENOM" id="CLU_036645_1_0_5"/>
<dbReference type="OrthoDB" id="9781789at2"/>
<dbReference type="UniPathway" id="UPA00028">
    <property type="reaction ID" value="UER00003"/>
</dbReference>
<dbReference type="Proteomes" id="UP000001108">
    <property type="component" value="Chromosome"/>
</dbReference>
<dbReference type="GO" id="GO:0005737">
    <property type="term" value="C:cytoplasm"/>
    <property type="evidence" value="ECO:0007669"/>
    <property type="project" value="UniProtKB-SubCell"/>
</dbReference>
<dbReference type="GO" id="GO:0003864">
    <property type="term" value="F:3-methyl-2-oxobutanoate hydroxymethyltransferase activity"/>
    <property type="evidence" value="ECO:0007669"/>
    <property type="project" value="UniProtKB-UniRule"/>
</dbReference>
<dbReference type="GO" id="GO:0000287">
    <property type="term" value="F:magnesium ion binding"/>
    <property type="evidence" value="ECO:0007669"/>
    <property type="project" value="TreeGrafter"/>
</dbReference>
<dbReference type="GO" id="GO:0015940">
    <property type="term" value="P:pantothenate biosynthetic process"/>
    <property type="evidence" value="ECO:0007669"/>
    <property type="project" value="UniProtKB-UniRule"/>
</dbReference>
<dbReference type="CDD" id="cd06557">
    <property type="entry name" value="KPHMT-like"/>
    <property type="match status" value="1"/>
</dbReference>
<dbReference type="FunFam" id="3.20.20.60:FF:000003">
    <property type="entry name" value="3-methyl-2-oxobutanoate hydroxymethyltransferase"/>
    <property type="match status" value="1"/>
</dbReference>
<dbReference type="Gene3D" id="3.20.20.60">
    <property type="entry name" value="Phosphoenolpyruvate-binding domains"/>
    <property type="match status" value="1"/>
</dbReference>
<dbReference type="HAMAP" id="MF_00156">
    <property type="entry name" value="PanB"/>
    <property type="match status" value="1"/>
</dbReference>
<dbReference type="InterPro" id="IPR003700">
    <property type="entry name" value="Pantoate_hydroxy_MeTrfase"/>
</dbReference>
<dbReference type="InterPro" id="IPR015813">
    <property type="entry name" value="Pyrv/PenolPyrv_kinase-like_dom"/>
</dbReference>
<dbReference type="InterPro" id="IPR040442">
    <property type="entry name" value="Pyrv_kinase-like_dom_sf"/>
</dbReference>
<dbReference type="NCBIfam" id="TIGR00222">
    <property type="entry name" value="panB"/>
    <property type="match status" value="1"/>
</dbReference>
<dbReference type="NCBIfam" id="NF001452">
    <property type="entry name" value="PRK00311.1"/>
    <property type="match status" value="1"/>
</dbReference>
<dbReference type="PANTHER" id="PTHR20881">
    <property type="entry name" value="3-METHYL-2-OXOBUTANOATE HYDROXYMETHYLTRANSFERASE"/>
    <property type="match status" value="1"/>
</dbReference>
<dbReference type="PANTHER" id="PTHR20881:SF0">
    <property type="entry name" value="3-METHYL-2-OXOBUTANOATE HYDROXYMETHYLTRANSFERASE"/>
    <property type="match status" value="1"/>
</dbReference>
<dbReference type="Pfam" id="PF02548">
    <property type="entry name" value="Pantoate_transf"/>
    <property type="match status" value="1"/>
</dbReference>
<dbReference type="PIRSF" id="PIRSF000388">
    <property type="entry name" value="Pantoate_hydroxy_MeTrfase"/>
    <property type="match status" value="1"/>
</dbReference>
<dbReference type="SUPFAM" id="SSF51621">
    <property type="entry name" value="Phosphoenolpyruvate/pyruvate domain"/>
    <property type="match status" value="1"/>
</dbReference>
<sequence>MSVHTTKRRLSPASIESLKGDRPIVSLTAYTTPIARLLDPHVDFLLVGDSLGMVLYGLDTTVGVTLDMMIAHGQAVMRGSERCCVVVDLPFGAYQESKEQAFRSAARILKETGCSAVKLEGGAEMAETVEFLVSRGIPVLGHVGLMPQLVNTTGGYRSVGRNEKEVAKIRRDAKAIDDAGAFAIVVEGTVEPVAREITATLRAPTIGIGASPACDGQILVSDDMLGLFNDFKPRFVKHFAELAPAISKAVEDYANEVKARTFPGIEHTFQVKR</sequence>
<organism>
    <name type="scientific">Sinorhizobium medicae (strain WSM419)</name>
    <name type="common">Ensifer medicae</name>
    <dbReference type="NCBI Taxonomy" id="366394"/>
    <lineage>
        <taxon>Bacteria</taxon>
        <taxon>Pseudomonadati</taxon>
        <taxon>Pseudomonadota</taxon>
        <taxon>Alphaproteobacteria</taxon>
        <taxon>Hyphomicrobiales</taxon>
        <taxon>Rhizobiaceae</taxon>
        <taxon>Sinorhizobium/Ensifer group</taxon>
        <taxon>Sinorhizobium</taxon>
    </lineage>
</organism>
<gene>
    <name evidence="1" type="primary">panB</name>
    <name type="ordered locus">Smed_2059</name>
</gene>
<feature type="chain" id="PRO_1000011380" description="3-methyl-2-oxobutanoate hydroxymethyltransferase">
    <location>
        <begin position="1"/>
        <end position="273"/>
    </location>
</feature>
<feature type="active site" description="Proton acceptor" evidence="1">
    <location>
        <position position="187"/>
    </location>
</feature>
<feature type="binding site" evidence="1">
    <location>
        <begin position="49"/>
        <end position="50"/>
    </location>
    <ligand>
        <name>3-methyl-2-oxobutanoate</name>
        <dbReference type="ChEBI" id="CHEBI:11851"/>
    </ligand>
</feature>
<feature type="binding site" evidence="1">
    <location>
        <position position="49"/>
    </location>
    <ligand>
        <name>Mg(2+)</name>
        <dbReference type="ChEBI" id="CHEBI:18420"/>
    </ligand>
</feature>
<feature type="binding site" evidence="1">
    <location>
        <position position="88"/>
    </location>
    <ligand>
        <name>3-methyl-2-oxobutanoate</name>
        <dbReference type="ChEBI" id="CHEBI:11851"/>
    </ligand>
</feature>
<feature type="binding site" evidence="1">
    <location>
        <position position="88"/>
    </location>
    <ligand>
        <name>Mg(2+)</name>
        <dbReference type="ChEBI" id="CHEBI:18420"/>
    </ligand>
</feature>
<feature type="binding site" evidence="1">
    <location>
        <position position="118"/>
    </location>
    <ligand>
        <name>3-methyl-2-oxobutanoate</name>
        <dbReference type="ChEBI" id="CHEBI:11851"/>
    </ligand>
</feature>
<feature type="binding site" evidence="1">
    <location>
        <position position="120"/>
    </location>
    <ligand>
        <name>Mg(2+)</name>
        <dbReference type="ChEBI" id="CHEBI:18420"/>
    </ligand>
</feature>
<comment type="function">
    <text evidence="1">Catalyzes the reversible reaction in which hydroxymethyl group from 5,10-methylenetetrahydrofolate is transferred onto alpha-ketoisovalerate to form ketopantoate.</text>
</comment>
<comment type="catalytic activity">
    <reaction evidence="1">
        <text>3-methyl-2-oxobutanoate + (6R)-5,10-methylene-5,6,7,8-tetrahydrofolate + H2O = 2-dehydropantoate + (6S)-5,6,7,8-tetrahydrofolate</text>
        <dbReference type="Rhea" id="RHEA:11824"/>
        <dbReference type="ChEBI" id="CHEBI:11561"/>
        <dbReference type="ChEBI" id="CHEBI:11851"/>
        <dbReference type="ChEBI" id="CHEBI:15377"/>
        <dbReference type="ChEBI" id="CHEBI:15636"/>
        <dbReference type="ChEBI" id="CHEBI:57453"/>
        <dbReference type="EC" id="2.1.2.11"/>
    </reaction>
</comment>
<comment type="cofactor">
    <cofactor evidence="1">
        <name>Mg(2+)</name>
        <dbReference type="ChEBI" id="CHEBI:18420"/>
    </cofactor>
    <text evidence="1">Binds 1 Mg(2+) ion per subunit.</text>
</comment>
<comment type="pathway">
    <text evidence="1">Cofactor biosynthesis; (R)-pantothenate biosynthesis; (R)-pantoate from 3-methyl-2-oxobutanoate: step 1/2.</text>
</comment>
<comment type="subunit">
    <text evidence="1">Homodecamer; pentamer of dimers.</text>
</comment>
<comment type="subcellular location">
    <subcellularLocation>
        <location evidence="1">Cytoplasm</location>
    </subcellularLocation>
</comment>
<comment type="similarity">
    <text evidence="1">Belongs to the PanB family.</text>
</comment>
<accession>A6UB62</accession>
<evidence type="ECO:0000255" key="1">
    <source>
        <dbReference type="HAMAP-Rule" id="MF_00156"/>
    </source>
</evidence>
<keyword id="KW-0963">Cytoplasm</keyword>
<keyword id="KW-0460">Magnesium</keyword>
<keyword id="KW-0479">Metal-binding</keyword>
<keyword id="KW-0566">Pantothenate biosynthesis</keyword>
<keyword id="KW-0808">Transferase</keyword>
<proteinExistence type="inferred from homology"/>
<protein>
    <recommendedName>
        <fullName evidence="1">3-methyl-2-oxobutanoate hydroxymethyltransferase</fullName>
        <ecNumber evidence="1">2.1.2.11</ecNumber>
    </recommendedName>
    <alternativeName>
        <fullName evidence="1">Ketopantoate hydroxymethyltransferase</fullName>
        <shortName evidence="1">KPHMT</shortName>
    </alternativeName>
</protein>
<name>PANB_SINMW</name>